<sequence length="32" mass="3231">MTALLRVISLVVISVVVIIIPPCGAALGRGKA</sequence>
<organism>
    <name type="scientific">Shigella flexneri</name>
    <dbReference type="NCBI Taxonomy" id="623"/>
    <lineage>
        <taxon>Bacteria</taxon>
        <taxon>Pseudomonadati</taxon>
        <taxon>Pseudomonadota</taxon>
        <taxon>Gammaproteobacteria</taxon>
        <taxon>Enterobacterales</taxon>
        <taxon>Enterobacteriaceae</taxon>
        <taxon>Shigella</taxon>
    </lineage>
</organism>
<proteinExistence type="predicted"/>
<name>LPID_SHIFL</name>
<keyword id="KW-0028">Amino-acid biosynthesis</keyword>
<keyword id="KW-0100">Branched-chain amino acid biosynthesis</keyword>
<keyword id="KW-0428">Leader peptide</keyword>
<keyword id="KW-1185">Reference proteome</keyword>
<feature type="peptide" id="PRO_0000044759" description="ilv operon leader peptide">
    <location>
        <begin position="1"/>
        <end position="32"/>
    </location>
</feature>
<dbReference type="EMBL" id="AE005674">
    <property type="protein sequence ID" value="AAN45279.1"/>
    <property type="molecule type" value="Genomic_DNA"/>
</dbReference>
<dbReference type="EMBL" id="AE014073">
    <property type="protein sequence ID" value="AAP18918.1"/>
    <property type="molecule type" value="Genomic_DNA"/>
</dbReference>
<dbReference type="RefSeq" id="NP_709572.1">
    <property type="nucleotide sequence ID" value="NC_004337.2"/>
</dbReference>
<dbReference type="RefSeq" id="WP_001311244.1">
    <property type="nucleotide sequence ID" value="NZ_WPGW01000028.1"/>
</dbReference>
<dbReference type="STRING" id="198214.SF3842"/>
<dbReference type="PaxDb" id="198214-SF3842"/>
<dbReference type="GeneID" id="1026026"/>
<dbReference type="GeneID" id="98391002"/>
<dbReference type="KEGG" id="sfl:SF3842"/>
<dbReference type="KEGG" id="sfx:S3918"/>
<dbReference type="PATRIC" id="fig|623.157.peg.272"/>
<dbReference type="HOGENOM" id="CLU_220955_0_0_6"/>
<dbReference type="Proteomes" id="UP000001006">
    <property type="component" value="Chromosome"/>
</dbReference>
<dbReference type="Proteomes" id="UP000002673">
    <property type="component" value="Chromosome"/>
</dbReference>
<dbReference type="GO" id="GO:0008652">
    <property type="term" value="P:amino acid biosynthetic process"/>
    <property type="evidence" value="ECO:0007669"/>
    <property type="project" value="UniProtKB-KW"/>
</dbReference>
<dbReference type="GO" id="GO:0009082">
    <property type="term" value="P:branched-chain amino acid biosynthetic process"/>
    <property type="evidence" value="ECO:0007669"/>
    <property type="project" value="UniProtKB-KW"/>
</dbReference>
<dbReference type="InterPro" id="IPR012567">
    <property type="entry name" value="IlvGEDA_leader"/>
</dbReference>
<dbReference type="NCBIfam" id="NF007744">
    <property type="entry name" value="PRK10424.1"/>
    <property type="match status" value="1"/>
</dbReference>
<dbReference type="Pfam" id="PF08046">
    <property type="entry name" value="IlvGEDA_leader"/>
    <property type="match status" value="1"/>
</dbReference>
<reference key="1">
    <citation type="journal article" date="2002" name="Nucleic Acids Res.">
        <title>Genome sequence of Shigella flexneri 2a: insights into pathogenicity through comparison with genomes of Escherichia coli K12 and O157.</title>
        <authorList>
            <person name="Jin Q."/>
            <person name="Yuan Z."/>
            <person name="Xu J."/>
            <person name="Wang Y."/>
            <person name="Shen Y."/>
            <person name="Lu W."/>
            <person name="Wang J."/>
            <person name="Liu H."/>
            <person name="Yang J."/>
            <person name="Yang F."/>
            <person name="Zhang X."/>
            <person name="Zhang J."/>
            <person name="Yang G."/>
            <person name="Wu H."/>
            <person name="Qu D."/>
            <person name="Dong J."/>
            <person name="Sun L."/>
            <person name="Xue Y."/>
            <person name="Zhao A."/>
            <person name="Gao Y."/>
            <person name="Zhu J."/>
            <person name="Kan B."/>
            <person name="Ding K."/>
            <person name="Chen S."/>
            <person name="Cheng H."/>
            <person name="Yao Z."/>
            <person name="He B."/>
            <person name="Chen R."/>
            <person name="Ma D."/>
            <person name="Qiang B."/>
            <person name="Wen Y."/>
            <person name="Hou Y."/>
            <person name="Yu J."/>
        </authorList>
    </citation>
    <scope>NUCLEOTIDE SEQUENCE [LARGE SCALE GENOMIC DNA]</scope>
    <source>
        <strain>301 / Serotype 2a</strain>
    </source>
</reference>
<reference key="2">
    <citation type="journal article" date="2003" name="Infect. Immun.">
        <title>Complete genome sequence and comparative genomics of Shigella flexneri serotype 2a strain 2457T.</title>
        <authorList>
            <person name="Wei J."/>
            <person name="Goldberg M.B."/>
            <person name="Burland V."/>
            <person name="Venkatesan M.M."/>
            <person name="Deng W."/>
            <person name="Fournier G."/>
            <person name="Mayhew G.F."/>
            <person name="Plunkett G. III"/>
            <person name="Rose D.J."/>
            <person name="Darling A."/>
            <person name="Mau B."/>
            <person name="Perna N.T."/>
            <person name="Payne S.M."/>
            <person name="Runyen-Janecky L.J."/>
            <person name="Zhou S."/>
            <person name="Schwartz D.C."/>
            <person name="Blattner F.R."/>
        </authorList>
    </citation>
    <scope>NUCLEOTIDE SEQUENCE [LARGE SCALE GENOMIC DNA]</scope>
    <source>
        <strain>ATCC 700930 / 2457T / Serotype 2a</strain>
    </source>
</reference>
<gene>
    <name type="primary">ilvL</name>
    <name type="ordered locus">SF3842</name>
    <name type="ordered locus">S3918</name>
</gene>
<protein>
    <recommendedName>
        <fullName>ilv operon leader peptide</fullName>
    </recommendedName>
    <alternativeName>
        <fullName>ilvGMEDA operon attenuator peptide</fullName>
    </alternativeName>
</protein>
<accession>P62529</accession>
<accession>P03060</accession>